<reference key="1">
    <citation type="journal article" date="2011" name="PLoS Genet.">
        <title>Genome sequencing and comparative transcriptomics of the model entomopathogenic fungi Metarhizium anisopliae and M. acridum.</title>
        <authorList>
            <person name="Gao Q."/>
            <person name="Jin K."/>
            <person name="Ying S.-H."/>
            <person name="Zhang Y."/>
            <person name="Xiao G."/>
            <person name="Shang Y."/>
            <person name="Duan Z."/>
            <person name="Hu X."/>
            <person name="Xie X.-Q."/>
            <person name="Zhou G."/>
            <person name="Peng G."/>
            <person name="Luo Z."/>
            <person name="Huang W."/>
            <person name="Wang B."/>
            <person name="Fang W."/>
            <person name="Wang S."/>
            <person name="Zhong Y."/>
            <person name="Ma L.-J."/>
            <person name="St Leger R.J."/>
            <person name="Zhao G.-P."/>
            <person name="Pei Y."/>
            <person name="Feng M.-G."/>
            <person name="Xia Y."/>
            <person name="Wang C."/>
        </authorList>
    </citation>
    <scope>NUCLEOTIDE SEQUENCE [LARGE SCALE GENOMIC DNA]</scope>
    <source>
        <strain>ARSEF 23 / ATCC MYA-3075</strain>
    </source>
</reference>
<reference key="2">
    <citation type="journal article" date="2014" name="Proc. Natl. Acad. Sci. U.S.A.">
        <title>Trajectory and genomic determinants of fungal-pathogen speciation and host adaptation.</title>
        <authorList>
            <person name="Hu X."/>
            <person name="Xiao G."/>
            <person name="Zheng P."/>
            <person name="Shang Y."/>
            <person name="Su Y."/>
            <person name="Zhang X."/>
            <person name="Liu X."/>
            <person name="Zhan S."/>
            <person name="St Leger R.J."/>
            <person name="Wang C."/>
        </authorList>
    </citation>
    <scope>GENOME REANNOTATION</scope>
    <source>
        <strain>ARSEF 23 / ATCC MYA-3075</strain>
    </source>
</reference>
<reference key="3">
    <citation type="journal article" date="2024" name="Org. Lett.">
        <title>How fungi biosynthesize 3-nitropropanoic acid: the simplest yet lethal mycotoxin.</title>
        <authorList>
            <person name="Johnson C.W."/>
            <person name="Ohashi M."/>
            <person name="Tang Y."/>
        </authorList>
    </citation>
    <scope>FUNCTION</scope>
    <scope>CATALYTIC ACTIVITY</scope>
    <scope>COFACTOR</scope>
    <scope>PATHWAY</scope>
</reference>
<sequence length="357" mass="37244">MTALLRNECKQALAKSLPWTKSPLVISAPMRVMTGPGLAVAVSSAGGLGFLGPTLKPEDVFADLDKAAELLGSSPIQGAAGPSLLPIGVGFQTWNGDLEVAVSAVTKHRPCAVWLFAPRRGQAELNEWTAAIRSASPDTRVWLQVGSLGEAVEAAASATPPDVLVLQGAEGGGHGRHRDAQGTIALVPEVSDALGHSGIPLVAAGGIVDGRGAAAALTLGAAGVAMGTRFLASSEARISKGYQDEVVRASDGAKNTVRTQLYNHLRGTFGWPEPFSPRTLINRSWRDHEAGVEFDRLKELHDESAKTGDAGWGPEGRLATYVGAAVGLVRRVDDAAVIVRETRDQARAILTSVVAHL</sequence>
<name>NPAC_METRA</name>
<protein>
    <recommendedName>
        <fullName evidence="3">Nitronate monooxygenase npaC</fullName>
        <shortName evidence="3">NMO npaC</shortName>
        <ecNumber evidence="2">1.13.12.-</ecNumber>
    </recommendedName>
</protein>
<comment type="function">
    <text evidence="2">Nitronate monooxygenase; part of the gene cluster that mediates the biosynthesis of the deadly neurotoxic nitroalkane 3-nitropropanoic acid (3-NPA) that acts as an antimetabolite of succinate and irreversibly inhibits succinate dehydrogenase and disrupts mitochondrial oxidative phosphorylation (PubMed:38588324). Catalyzes the oxidation of 3-NPA to nitrite and malonic semialdehyde (PubMed:38588324). NpaC is not conserved in all fungal npa clusters and, while it is possible that it serves as a self-protection mechanism against accumulation of 3-NPA (by npaA and npaB) in the producing host, the more likely scenario may be the three enzymes representing an alternative catabolic pathway of aspartate to generate readily metabolizable nitrogen and carbon sources (PubMed:38588324).</text>
</comment>
<comment type="cofactor">
    <cofactor evidence="2">
        <name>FMN</name>
        <dbReference type="ChEBI" id="CHEBI:58210"/>
    </cofactor>
    <text evidence="1">Binds 1 FMN per subunit.</text>
</comment>
<comment type="similarity">
    <text evidence="4">Belongs to the nitronate monooxygenase family. NMO class I subfamily.</text>
</comment>
<proteinExistence type="evidence at protein level"/>
<accession>E9F689</accession>
<gene>
    <name evidence="3" type="primary">npaC</name>
    <name type="ORF">MAA_07788</name>
</gene>
<dbReference type="EC" id="1.13.12.-" evidence="2"/>
<dbReference type="EMBL" id="ADNJ02000010">
    <property type="protein sequence ID" value="EFY96727.1"/>
    <property type="molecule type" value="Genomic_DNA"/>
</dbReference>
<dbReference type="RefSeq" id="XP_007823977.1">
    <property type="nucleotide sequence ID" value="XM_007825786.1"/>
</dbReference>
<dbReference type="SMR" id="E9F689"/>
<dbReference type="GeneID" id="19262074"/>
<dbReference type="KEGG" id="maj:MAA_07788"/>
<dbReference type="HOGENOM" id="CLU_038732_9_0_1"/>
<dbReference type="OrthoDB" id="2349068at2759"/>
<dbReference type="Proteomes" id="UP000002498">
    <property type="component" value="Unassembled WGS sequence"/>
</dbReference>
<dbReference type="GO" id="GO:0018580">
    <property type="term" value="F:nitronate monooxygenase activity"/>
    <property type="evidence" value="ECO:0007669"/>
    <property type="project" value="InterPro"/>
</dbReference>
<dbReference type="GO" id="GO:0000166">
    <property type="term" value="F:nucleotide binding"/>
    <property type="evidence" value="ECO:0007669"/>
    <property type="project" value="UniProtKB-KW"/>
</dbReference>
<dbReference type="GO" id="GO:0009636">
    <property type="term" value="P:response to toxic substance"/>
    <property type="evidence" value="ECO:0007669"/>
    <property type="project" value="UniProtKB-KW"/>
</dbReference>
<dbReference type="CDD" id="cd04730">
    <property type="entry name" value="NPD_like"/>
    <property type="match status" value="1"/>
</dbReference>
<dbReference type="Gene3D" id="3.20.20.70">
    <property type="entry name" value="Aldolase class I"/>
    <property type="match status" value="1"/>
</dbReference>
<dbReference type="InterPro" id="IPR013785">
    <property type="entry name" value="Aldolase_TIM"/>
</dbReference>
<dbReference type="InterPro" id="IPR004136">
    <property type="entry name" value="NMO"/>
</dbReference>
<dbReference type="PANTHER" id="PTHR32332">
    <property type="entry name" value="2-NITROPROPANE DIOXYGENASE"/>
    <property type="match status" value="1"/>
</dbReference>
<dbReference type="PANTHER" id="PTHR32332:SF34">
    <property type="entry name" value="2-NITROPROPANE DIOXYGENASE FAMILY, PUTATIVE-RELATED"/>
    <property type="match status" value="1"/>
</dbReference>
<dbReference type="Pfam" id="PF03060">
    <property type="entry name" value="NMO"/>
    <property type="match status" value="1"/>
</dbReference>
<dbReference type="SUPFAM" id="SSF51412">
    <property type="entry name" value="Inosine monophosphate dehydrogenase (IMPDH)"/>
    <property type="match status" value="1"/>
</dbReference>
<keyword id="KW-0216">Detoxification</keyword>
<keyword id="KW-0285">Flavoprotein</keyword>
<keyword id="KW-0288">FMN</keyword>
<keyword id="KW-0503">Monooxygenase</keyword>
<keyword id="KW-0547">Nucleotide-binding</keyword>
<keyword id="KW-0560">Oxidoreductase</keyword>
<organism>
    <name type="scientific">Metarhizium robertsii (strain ARSEF 23 / ATCC MYA-3075)</name>
    <name type="common">Metarhizium anisopliae (strain ARSEF 23)</name>
    <dbReference type="NCBI Taxonomy" id="655844"/>
    <lineage>
        <taxon>Eukaryota</taxon>
        <taxon>Fungi</taxon>
        <taxon>Dikarya</taxon>
        <taxon>Ascomycota</taxon>
        <taxon>Pezizomycotina</taxon>
        <taxon>Sordariomycetes</taxon>
        <taxon>Hypocreomycetidae</taxon>
        <taxon>Hypocreales</taxon>
        <taxon>Clavicipitaceae</taxon>
        <taxon>Metarhizium</taxon>
    </lineage>
</organism>
<feature type="chain" id="PRO_0000461476" description="Nitronate monooxygenase npaC">
    <location>
        <begin position="1"/>
        <end position="357"/>
    </location>
</feature>
<feature type="binding site" evidence="1">
    <location>
        <position position="167"/>
    </location>
    <ligand>
        <name>FMN</name>
        <dbReference type="ChEBI" id="CHEBI:58210"/>
    </ligand>
</feature>
<feature type="binding site" evidence="1">
    <location>
        <position position="172"/>
    </location>
    <ligand>
        <name>FMN</name>
        <dbReference type="ChEBI" id="CHEBI:58210"/>
    </ligand>
</feature>
<feature type="binding site" evidence="1">
    <location>
        <position position="206"/>
    </location>
    <ligand>
        <name>FMN</name>
        <dbReference type="ChEBI" id="CHEBI:58210"/>
    </ligand>
</feature>
<evidence type="ECO:0000250" key="1">
    <source>
        <dbReference type="UniProtKB" id="Q9HWH9"/>
    </source>
</evidence>
<evidence type="ECO:0000269" key="2">
    <source>
    </source>
</evidence>
<evidence type="ECO:0000303" key="3">
    <source>
    </source>
</evidence>
<evidence type="ECO:0000305" key="4"/>